<name>PBS2_YEAST</name>
<protein>
    <recommendedName>
        <fullName>MAP kinase kinase PBS2</fullName>
        <ecNumber evidence="10">2.7.12.2</ecNumber>
    </recommendedName>
    <alternativeName>
        <fullName>Polymyxin B resistance protein 2</fullName>
    </alternativeName>
    <alternativeName>
        <fullName>Suppressor of fluoride sensitivity 4</fullName>
    </alternativeName>
</protein>
<comment type="function">
    <text evidence="4 9 10 12">Kinase involved in a signal transduction pathway that is activated by changes in the osmolarity of the extracellular environment (PubMed:10970855, PubMed:15256499, PubMed:7681220). Activates the MAP kinase HOG1 by concomitant phosphorylation at 'Thr-174' and 'Tyr-176' (PubMed:38270553, PubMed:7681220).</text>
</comment>
<comment type="catalytic activity">
    <reaction>
        <text>L-seryl-[protein] + ATP = O-phospho-L-seryl-[protein] + ADP + H(+)</text>
        <dbReference type="Rhea" id="RHEA:17989"/>
        <dbReference type="Rhea" id="RHEA-COMP:9863"/>
        <dbReference type="Rhea" id="RHEA-COMP:11604"/>
        <dbReference type="ChEBI" id="CHEBI:15378"/>
        <dbReference type="ChEBI" id="CHEBI:29999"/>
        <dbReference type="ChEBI" id="CHEBI:30616"/>
        <dbReference type="ChEBI" id="CHEBI:83421"/>
        <dbReference type="ChEBI" id="CHEBI:456216"/>
        <dbReference type="EC" id="2.7.12.2"/>
    </reaction>
</comment>
<comment type="catalytic activity">
    <reaction evidence="10">
        <text>L-threonyl-[protein] + ATP = O-phospho-L-threonyl-[protein] + ADP + H(+)</text>
        <dbReference type="Rhea" id="RHEA:46608"/>
        <dbReference type="Rhea" id="RHEA-COMP:11060"/>
        <dbReference type="Rhea" id="RHEA-COMP:11605"/>
        <dbReference type="ChEBI" id="CHEBI:15378"/>
        <dbReference type="ChEBI" id="CHEBI:30013"/>
        <dbReference type="ChEBI" id="CHEBI:30616"/>
        <dbReference type="ChEBI" id="CHEBI:61977"/>
        <dbReference type="ChEBI" id="CHEBI:456216"/>
        <dbReference type="EC" id="2.7.12.2"/>
    </reaction>
    <physiologicalReaction direction="left-to-right" evidence="10">
        <dbReference type="Rhea" id="RHEA:46609"/>
    </physiologicalReaction>
</comment>
<comment type="catalytic activity">
    <reaction evidence="10">
        <text>L-tyrosyl-[protein] + ATP = O-phospho-L-tyrosyl-[protein] + ADP + H(+)</text>
        <dbReference type="Rhea" id="RHEA:10596"/>
        <dbReference type="Rhea" id="RHEA-COMP:10136"/>
        <dbReference type="Rhea" id="RHEA-COMP:20101"/>
        <dbReference type="ChEBI" id="CHEBI:15378"/>
        <dbReference type="ChEBI" id="CHEBI:30616"/>
        <dbReference type="ChEBI" id="CHEBI:46858"/>
        <dbReference type="ChEBI" id="CHEBI:61978"/>
        <dbReference type="ChEBI" id="CHEBI:456216"/>
        <dbReference type="EC" id="2.7.12.2"/>
    </reaction>
    <physiologicalReaction direction="left-to-right" evidence="10">
        <dbReference type="Rhea" id="RHEA:10597"/>
    </physiologicalReaction>
</comment>
<comment type="subunit">
    <text evidence="4 7 8 9">Interacts with NBP2, PTC1, SHO1 and STE11.</text>
</comment>
<comment type="interaction">
    <interactant intactId="EBI-12972">
        <id>P08018</id>
    </interactant>
    <interactant intactId="EBI-34713">
        <id>Q12163</id>
        <label>NBP2</label>
    </interactant>
    <organismsDiffer>false</organismsDiffer>
    <experiments>3</experiments>
</comment>
<comment type="interaction">
    <interactant intactId="EBI-12972">
        <id>P08018</id>
    </interactant>
    <interactant intactId="EBI-18140">
        <id>P40073</id>
        <label>SHO1</label>
    </interactant>
    <organismsDiffer>false</organismsDiffer>
    <experiments>8</experiments>
</comment>
<comment type="subcellular location">
    <subcellularLocation>
        <location evidence="5">Cytoplasm</location>
    </subcellularLocation>
</comment>
<comment type="domain">
    <text evidence="11">Alternative way of activation involves binding the proline-rich motif to the SH3 domain of SHO1.</text>
</comment>
<comment type="PTM">
    <text evidence="11">Activated by phosphorylation by SSK2 or SSK22. Ser/Thr phosphorylation is also necessary for SHO1-mediated activation.</text>
</comment>
<comment type="disruption phenotype">
    <text evidence="10">Leads to sensitivity to osmotic stress (induced by NaCl, KCl, and sorbitol), actinomycin D (transcription inhibitor), galactose, sirolimus (rapamycin), UV irradiation, and methyl methanesulfonate (MMS).</text>
</comment>
<comment type="miscellaneous">
    <text evidence="6">Present with 2160 molecules/cell in log phase SD medium.</text>
</comment>
<comment type="similarity">
    <text evidence="13">Belongs to the protein kinase superfamily. STE Ser/Thr protein kinase family. MAP kinase kinase subfamily.</text>
</comment>
<reference key="1">
    <citation type="journal article" date="1987" name="Proc. Natl. Acad. Sci. U.S.A.">
        <title>Complete nucleotide sequence of a gene conferring polymyxin B resistance on yeast: similarity of the predicted polypeptide to protein kinases.</title>
        <authorList>
            <person name="Boguslawski G."/>
            <person name="Polazzi J.O."/>
        </authorList>
    </citation>
    <scope>NUCLEOTIDE SEQUENCE</scope>
</reference>
<reference key="2">
    <citation type="journal article" date="1992" name="J. Gen. Microbiol.">
        <title>PBS2, a yeast gene encoding a putative protein kinase, interacts with the RAS2 pathway and affects osmotic sensitivity of Saccharomyces cerevisiae.</title>
        <authorList>
            <person name="Boguslawski G."/>
        </authorList>
    </citation>
    <scope>SEQUENCE REVISION TO 222-223 AND 668</scope>
</reference>
<reference key="3">
    <citation type="journal article" date="1995" name="J. Biol. Chem.">
        <title>Mutational analysis of Saccharomyces cerevisiae ARF1.</title>
        <authorList>
            <person name="Kahn R.A."/>
            <person name="Clark J."/>
            <person name="Rulka C."/>
            <person name="Stearns T."/>
            <person name="Zhang C.J."/>
            <person name="Randazzo P.A."/>
            <person name="Terui T."/>
            <person name="Cavenagh M."/>
        </authorList>
    </citation>
    <scope>NUCLEOTIDE SEQUENCE [GENOMIC DNA]</scope>
</reference>
<reference key="4">
    <citation type="journal article" date="1996" name="Yeast">
        <title>Sequencing analysis of a 40.2 kb fragment of yeast chromosome X reveals 19 open reading frames including URA2 (5' end), TRK1, PBS2, SPT10, GCD14, RPE1, PHO86, NCA3, ASF1, CCT7, GZF3, two tRNA genes, three remnant delta elements and a Ty4 transposon.</title>
        <authorList>
            <person name="Cziepluch C."/>
            <person name="Kordes E."/>
            <person name="Pujol A."/>
            <person name="Jauniaux J.-C."/>
        </authorList>
    </citation>
    <scope>NUCLEOTIDE SEQUENCE [GENOMIC DNA]</scope>
    <source>
        <strain>ATCC 96604 / S288c / FY1679</strain>
    </source>
</reference>
<reference key="5">
    <citation type="journal article" date="1996" name="EMBO J.">
        <title>Complete nucleotide sequence of Saccharomyces cerevisiae chromosome X.</title>
        <authorList>
            <person name="Galibert F."/>
            <person name="Alexandraki D."/>
            <person name="Baur A."/>
            <person name="Boles E."/>
            <person name="Chalwatzis N."/>
            <person name="Chuat J.-C."/>
            <person name="Coster F."/>
            <person name="Cziepluch C."/>
            <person name="de Haan M."/>
            <person name="Domdey H."/>
            <person name="Durand P."/>
            <person name="Entian K.-D."/>
            <person name="Gatius M."/>
            <person name="Goffeau A."/>
            <person name="Grivell L.A."/>
            <person name="Hennemann A."/>
            <person name="Herbert C.J."/>
            <person name="Heumann K."/>
            <person name="Hilger F."/>
            <person name="Hollenberg C.P."/>
            <person name="Huang M.-E."/>
            <person name="Jacq C."/>
            <person name="Jauniaux J.-C."/>
            <person name="Katsoulou C."/>
            <person name="Kirchrath L."/>
            <person name="Kleine K."/>
            <person name="Kordes E."/>
            <person name="Koetter P."/>
            <person name="Liebl S."/>
            <person name="Louis E.J."/>
            <person name="Manus V."/>
            <person name="Mewes H.-W."/>
            <person name="Miosga T."/>
            <person name="Obermaier B."/>
            <person name="Perea J."/>
            <person name="Pohl T.M."/>
            <person name="Portetelle D."/>
            <person name="Pujol A."/>
            <person name="Purnelle B."/>
            <person name="Ramezani Rad M."/>
            <person name="Rasmussen S.W."/>
            <person name="Rose M."/>
            <person name="Rossau R."/>
            <person name="Schaaff-Gerstenschlaeger I."/>
            <person name="Smits P.H.M."/>
            <person name="Scarcez T."/>
            <person name="Soriano N."/>
            <person name="To Van D."/>
            <person name="Tzermia M."/>
            <person name="Van Broekhoven A."/>
            <person name="Vandenbol M."/>
            <person name="Wedler H."/>
            <person name="von Wettstein D."/>
            <person name="Wambutt R."/>
            <person name="Zagulski M."/>
            <person name="Zollner A."/>
            <person name="Karpfinger-Hartl L."/>
        </authorList>
    </citation>
    <scope>NUCLEOTIDE SEQUENCE [LARGE SCALE GENOMIC DNA]</scope>
    <source>
        <strain>ATCC 204508 / S288c</strain>
    </source>
</reference>
<reference key="6">
    <citation type="journal article" date="2014" name="G3 (Bethesda)">
        <title>The reference genome sequence of Saccharomyces cerevisiae: Then and now.</title>
        <authorList>
            <person name="Engel S.R."/>
            <person name="Dietrich F.S."/>
            <person name="Fisk D.G."/>
            <person name="Binkley G."/>
            <person name="Balakrishnan R."/>
            <person name="Costanzo M.C."/>
            <person name="Dwight S.S."/>
            <person name="Hitz B.C."/>
            <person name="Karra K."/>
            <person name="Nash R.S."/>
            <person name="Weng S."/>
            <person name="Wong E.D."/>
            <person name="Lloyd P."/>
            <person name="Skrzypek M.S."/>
            <person name="Miyasato S.R."/>
            <person name="Simison M."/>
            <person name="Cherry J.M."/>
        </authorList>
    </citation>
    <scope>GENOME REANNOTATION</scope>
    <scope>SEQUENCE REVISION TO 222-223</scope>
    <source>
        <strain>ATCC 204508 / S288c</strain>
    </source>
</reference>
<reference key="7">
    <citation type="journal article" date="1995" name="Science">
        <title>Activation of yeast PBS2 MAPKK by MAPKKKs or by binding of an SH3-containing osmosensor.</title>
        <authorList>
            <person name="Maeda T."/>
            <person name="Takekawa M."/>
            <person name="Saito H."/>
        </authorList>
    </citation>
    <scope>NUCLEOTIDE SEQUENCE OF 91-101</scope>
    <scope>DOMAIN</scope>
    <scope>PHOSPHORYLATION AT SER-514 AND THR-518</scope>
    <scope>MUTAGENESIS OF PRO-96; LYS-389; SER-514 AND THR-518</scope>
</reference>
<reference key="8">
    <citation type="journal article" date="1993" name="Science">
        <title>An osmosensing signal transduction pathway in yeast.</title>
        <authorList>
            <person name="Brewster J.L."/>
            <person name="de Valoir T."/>
            <person name="Dwyer N.D."/>
            <person name="Winter E."/>
            <person name="Gustin M.C."/>
        </authorList>
    </citation>
    <scope>FUNCTION</scope>
</reference>
<reference key="9">
    <citation type="journal article" date="2000" name="EMBO J.">
        <title>Yeast Cdc42 GTPase and Ste20 PAK-like kinase regulate Sho1-dependent activation of the Hog1 MAPK pathway.</title>
        <authorList>
            <person name="Raitt D.C."/>
            <person name="Posas F."/>
            <person name="Saito H."/>
        </authorList>
    </citation>
    <scope>FUNCTION</scope>
    <scope>INTERACTION WITH SHO1</scope>
</reference>
<reference key="10">
    <citation type="journal article" date="2003" name="Nature">
        <title>Global analysis of protein localization in budding yeast.</title>
        <authorList>
            <person name="Huh W.-K."/>
            <person name="Falvo J.V."/>
            <person name="Gerke L.C."/>
            <person name="Carroll A.S."/>
            <person name="Howson R.W."/>
            <person name="Weissman J.S."/>
            <person name="O'Shea E.K."/>
        </authorList>
    </citation>
    <scope>SUBCELLULAR LOCATION [LARGE SCALE ANALYSIS]</scope>
</reference>
<reference key="11">
    <citation type="journal article" date="2003" name="Nature">
        <title>Global analysis of protein expression in yeast.</title>
        <authorList>
            <person name="Ghaemmaghami S."/>
            <person name="Huh W.-K."/>
            <person name="Bower K."/>
            <person name="Howson R.W."/>
            <person name="Belle A."/>
            <person name="Dephoure N."/>
            <person name="O'Shea E.K."/>
            <person name="Weissman J.S."/>
        </authorList>
    </citation>
    <scope>LEVEL OF PROTEIN EXPRESSION [LARGE SCALE ANALYSIS]</scope>
</reference>
<reference key="12">
    <citation type="journal article" date="2004" name="EMBO J.">
        <title>Nbp2 targets the Ptc1-type 2C Ser/Thr phosphatase to the HOG MAPK pathway.</title>
        <authorList>
            <person name="Mapes J."/>
            <person name="Ota I.M."/>
        </authorList>
    </citation>
    <scope>INTERACTION WITH NBP2 AND PTC1</scope>
</reference>
<reference key="13">
    <citation type="journal article" date="2004" name="Genes Dev.">
        <title>A signaling mucin at the head of the Cdc42- and MAPK-dependent filamentous growth pathway in yeast.</title>
        <authorList>
            <person name="Cullen P.J."/>
            <person name="Sabbagh W. Jr."/>
            <person name="Graham E."/>
            <person name="Irick M.M."/>
            <person name="van Olden E.K."/>
            <person name="Neal C."/>
            <person name="Delrow J."/>
            <person name="Bardwell L."/>
            <person name="Sprague G.F. Jr."/>
        </authorList>
    </citation>
    <scope>FUNCTION</scope>
    <scope>INTERACTION WITH SHO1</scope>
</reference>
<reference key="14">
    <citation type="journal article" date="2004" name="Mol. Cell">
        <title>Protein-protein interaction affinity plays a crucial role in controlling the Sho1p-mediated signal transduction pathway in yeast.</title>
        <authorList>
            <person name="Marles J.A."/>
            <person name="Dahesh S."/>
            <person name="Haynes J."/>
            <person name="Andrews B.J."/>
            <person name="Davidson A.R."/>
        </authorList>
    </citation>
    <scope>INTERACTION WITH SHO1 AND STE11</scope>
</reference>
<reference key="15">
    <citation type="journal article" date="2007" name="J. Proteome Res.">
        <title>Large-scale phosphorylation analysis of alpha-factor-arrested Saccharomyces cerevisiae.</title>
        <authorList>
            <person name="Li X."/>
            <person name="Gerber S.A."/>
            <person name="Rudner A.D."/>
            <person name="Beausoleil S.A."/>
            <person name="Haas W."/>
            <person name="Villen J."/>
            <person name="Elias J.E."/>
            <person name="Gygi S.P."/>
        </authorList>
    </citation>
    <scope>IDENTIFICATION BY MASS SPECTROMETRY [LARGE SCALE ANALYSIS]</scope>
    <source>
        <strain>ADR376</strain>
    </source>
</reference>
<reference key="16">
    <citation type="journal article" date="2007" name="Proc. Natl. Acad. Sci. U.S.A.">
        <title>Analysis of phosphorylation sites on proteins from Saccharomyces cerevisiae by electron transfer dissociation (ETD) mass spectrometry.</title>
        <authorList>
            <person name="Chi A."/>
            <person name="Huttenhower C."/>
            <person name="Geer L.Y."/>
            <person name="Coon J.J."/>
            <person name="Syka J.E.P."/>
            <person name="Bai D.L."/>
            <person name="Shabanowitz J."/>
            <person name="Burke D.J."/>
            <person name="Troyanskaya O.G."/>
            <person name="Hunt D.F."/>
        </authorList>
    </citation>
    <scope>PHOSPHORYLATION [LARGE SCALE ANALYSIS] AT SER-68</scope>
    <scope>IDENTIFICATION BY MASS SPECTROMETRY [LARGE SCALE ANALYSIS]</scope>
</reference>
<reference key="17">
    <citation type="journal article" date="2008" name="Mol. Cell. Proteomics">
        <title>A multidimensional chromatography technology for in-depth phosphoproteome analysis.</title>
        <authorList>
            <person name="Albuquerque C.P."/>
            <person name="Smolka M.B."/>
            <person name="Payne S.H."/>
            <person name="Bafna V."/>
            <person name="Eng J."/>
            <person name="Zhou H."/>
        </authorList>
    </citation>
    <scope>PHOSPHORYLATION [LARGE SCALE ANALYSIS] AT SER-514</scope>
    <scope>IDENTIFICATION BY MASS SPECTROMETRY [LARGE SCALE ANALYSIS]</scope>
</reference>
<reference key="18">
    <citation type="journal article" date="2009" name="Science">
        <title>Global analysis of Cdk1 substrate phosphorylation sites provides insights into evolution.</title>
        <authorList>
            <person name="Holt L.J."/>
            <person name="Tuch B.B."/>
            <person name="Villen J."/>
            <person name="Johnson A.D."/>
            <person name="Gygi S.P."/>
            <person name="Morgan D.O."/>
        </authorList>
    </citation>
    <scope>PHOSPHORYLATION [LARGE SCALE ANALYSIS] AT SER-269</scope>
    <scope>IDENTIFICATION BY MASS SPECTROMETRY [LARGE SCALE ANALYSIS]</scope>
</reference>
<reference key="19">
    <citation type="journal article" date="2024" name="FEBS J.">
        <title>Proline-directed yeast and human MAP kinases phosphorylate the Dot1p/DOT1L histone H3K79 methyltransferase.</title>
        <authorList>
            <person name="Separovich R.J."/>
            <person name="Karakatsanis N.M."/>
            <person name="Gao K."/>
            <person name="Fuh D."/>
            <person name="Hamey J.J."/>
            <person name="Wilkins M.R."/>
        </authorList>
    </citation>
    <scope>FUNCTION</scope>
    <scope>CATALYTIC ACTIVITY</scope>
    <scope>DISRUPTION PHENOTYPE</scope>
</reference>
<sequence>MEDKFANLSLHEKTGKSSIQLNEQTGSDNGSAVKRTSSTSSHYNNINADLHARVKAFQEQRALKRSASVGSNQSEQDKGSSQSPKHIQQIVNKPLPPLPVAGSSKVSQRMSSQVVQASSKSTLKNVLDNQETQNITDVNINIDTTKITATTIGVNTGLPATDITPSVSNTASATHKAQLLNPNRRAPRRPLSTQHPTRPNVAPHKAPAIINTPKQSLSARRGLKLPPGGMSLKMPTKTAQQPQQFAPSPSNKKHIETLSNSKVVEGKRSNPGSLINGVQSTSTSSSTEGPHDTVGTTPRTGNSNNSSNSGSSGGGGLFANFSKYVDIKSGSLNFAGKLSLSSKGIDFSNGSSSRITLDELEFLDELGHGNYGNVSKVLHKPTNVIMATKEVRLELDEAKFRQILMELEVLHKCNSPYIVDFYGAFFIEGAVYMCMEYMDGGSLDKIYDESSEIGGIDEPQLAFIANAVIHGLKELKEQHNIIHRDVKPTNILCSANQGTVKLCDFGVSGNLVASLAKTNIGCQSYMAPERIKSLNPDRATYTVQSDIWSLGLSILEMALGRYPYPPETYDNIFSQLSAIVDGPPPRLPSDKFSSDAQDFVSLCLQKIPERRPTYAALTEHPWLVKYRNQDVHMSEYITERLERRNKILRERGENGLSKNVPALHMGGL</sequence>
<proteinExistence type="evidence at protein level"/>
<organism>
    <name type="scientific">Saccharomyces cerevisiae (strain ATCC 204508 / S288c)</name>
    <name type="common">Baker's yeast</name>
    <dbReference type="NCBI Taxonomy" id="559292"/>
    <lineage>
        <taxon>Eukaryota</taxon>
        <taxon>Fungi</taxon>
        <taxon>Dikarya</taxon>
        <taxon>Ascomycota</taxon>
        <taxon>Saccharomycotina</taxon>
        <taxon>Saccharomycetes</taxon>
        <taxon>Saccharomycetales</taxon>
        <taxon>Saccharomycetaceae</taxon>
        <taxon>Saccharomyces</taxon>
    </lineage>
</organism>
<evidence type="ECO:0000255" key="1">
    <source>
        <dbReference type="PROSITE-ProRule" id="PRU00159"/>
    </source>
</evidence>
<evidence type="ECO:0000255" key="2">
    <source>
        <dbReference type="PROSITE-ProRule" id="PRU10027"/>
    </source>
</evidence>
<evidence type="ECO:0000256" key="3">
    <source>
        <dbReference type="SAM" id="MobiDB-lite"/>
    </source>
</evidence>
<evidence type="ECO:0000269" key="4">
    <source>
    </source>
</evidence>
<evidence type="ECO:0000269" key="5">
    <source>
    </source>
</evidence>
<evidence type="ECO:0000269" key="6">
    <source>
    </source>
</evidence>
<evidence type="ECO:0000269" key="7">
    <source>
    </source>
</evidence>
<evidence type="ECO:0000269" key="8">
    <source>
    </source>
</evidence>
<evidence type="ECO:0000269" key="9">
    <source>
    </source>
</evidence>
<evidence type="ECO:0000269" key="10">
    <source>
    </source>
</evidence>
<evidence type="ECO:0000269" key="11">
    <source>
    </source>
</evidence>
<evidence type="ECO:0000269" key="12">
    <source>
    </source>
</evidence>
<evidence type="ECO:0000305" key="13"/>
<evidence type="ECO:0007744" key="14">
    <source>
    </source>
</evidence>
<evidence type="ECO:0007744" key="15">
    <source>
    </source>
</evidence>
<evidence type="ECO:0007744" key="16">
    <source>
    </source>
</evidence>
<accession>P08018</accession>
<accession>D6VW57</accession>
<keyword id="KW-0002">3D-structure</keyword>
<keyword id="KW-0046">Antibiotic resistance</keyword>
<keyword id="KW-0067">ATP-binding</keyword>
<keyword id="KW-0963">Cytoplasm</keyword>
<keyword id="KW-0418">Kinase</keyword>
<keyword id="KW-0547">Nucleotide-binding</keyword>
<keyword id="KW-0597">Phosphoprotein</keyword>
<keyword id="KW-1185">Reference proteome</keyword>
<keyword id="KW-0723">Serine/threonine-protein kinase</keyword>
<keyword id="KW-0808">Transferase</keyword>
<keyword id="KW-0829">Tyrosine-protein kinase</keyword>
<gene>
    <name type="primary">PBS2</name>
    <name type="synonym">HOG4</name>
    <name type="synonym">SFS4</name>
    <name type="synonym">SSK4</name>
    <name type="ordered locus">YJL128C</name>
    <name type="ORF">J0699</name>
</gene>
<feature type="chain" id="PRO_0000086483" description="MAP kinase kinase PBS2">
    <location>
        <begin position="1"/>
        <end position="668"/>
    </location>
</feature>
<feature type="domain" description="Protein kinase" evidence="1">
    <location>
        <begin position="360"/>
        <end position="623"/>
    </location>
</feature>
<feature type="region of interest" description="Disordered" evidence="3">
    <location>
        <begin position="1"/>
        <end position="43"/>
    </location>
</feature>
<feature type="region of interest" description="Disordered" evidence="3">
    <location>
        <begin position="61"/>
        <end position="120"/>
    </location>
</feature>
<feature type="region of interest" description="Disordered" evidence="3">
    <location>
        <begin position="181"/>
        <end position="313"/>
    </location>
</feature>
<feature type="compositionally biased region" description="Basic and acidic residues" evidence="3">
    <location>
        <begin position="1"/>
        <end position="15"/>
    </location>
</feature>
<feature type="compositionally biased region" description="Polar residues" evidence="3">
    <location>
        <begin position="16"/>
        <end position="43"/>
    </location>
</feature>
<feature type="compositionally biased region" description="Polar residues" evidence="3">
    <location>
        <begin position="68"/>
        <end position="91"/>
    </location>
</feature>
<feature type="compositionally biased region" description="Polar residues" evidence="3">
    <location>
        <begin position="104"/>
        <end position="120"/>
    </location>
</feature>
<feature type="compositionally biased region" description="Low complexity" evidence="3">
    <location>
        <begin position="239"/>
        <end position="250"/>
    </location>
</feature>
<feature type="compositionally biased region" description="Polar residues" evidence="3">
    <location>
        <begin position="270"/>
        <end position="300"/>
    </location>
</feature>
<feature type="compositionally biased region" description="Low complexity" evidence="3">
    <location>
        <begin position="301"/>
        <end position="310"/>
    </location>
</feature>
<feature type="active site" description="Proton acceptor" evidence="1 2">
    <location>
        <position position="485"/>
    </location>
</feature>
<feature type="binding site" evidence="1">
    <location>
        <begin position="366"/>
        <end position="374"/>
    </location>
    <ligand>
        <name>ATP</name>
        <dbReference type="ChEBI" id="CHEBI:30616"/>
    </ligand>
</feature>
<feature type="binding site" evidence="1">
    <location>
        <position position="389"/>
    </location>
    <ligand>
        <name>ATP</name>
        <dbReference type="ChEBI" id="CHEBI:30616"/>
    </ligand>
</feature>
<feature type="modified residue" description="Phosphoserine" evidence="14">
    <location>
        <position position="68"/>
    </location>
</feature>
<feature type="modified residue" description="Phosphoserine" evidence="16">
    <location>
        <position position="269"/>
    </location>
</feature>
<feature type="modified residue" description="Phosphoserine" evidence="11 15">
    <location>
        <position position="514"/>
    </location>
</feature>
<feature type="modified residue" description="Phosphothreonine" evidence="11">
    <location>
        <position position="518"/>
    </location>
</feature>
<feature type="mutagenesis site" description="In PBS2-13; loss of SH3-domain interaction." evidence="11">
    <original>P</original>
    <variation>S</variation>
    <location>
        <position position="96"/>
    </location>
</feature>
<feature type="mutagenesis site" description="Loss of activity." evidence="11">
    <original>K</original>
    <variation>M</variation>
    <location>
        <position position="389"/>
    </location>
</feature>
<feature type="mutagenesis site" description="Loss of phosphorylation." evidence="11">
    <original>S</original>
    <variation>A</variation>
    <location>
        <position position="514"/>
    </location>
</feature>
<feature type="mutagenesis site" description="Loss of phosphorylation." evidence="11">
    <original>T</original>
    <variation>A</variation>
    <location>
        <position position="518"/>
    </location>
</feature>
<feature type="sequence conflict" description="In Ref. 4 and 5; CAA89423." evidence="13" ref="4 5">
    <original>GL</original>
    <variation>AV</variation>
    <location>
        <begin position="222"/>
        <end position="223"/>
    </location>
</feature>
<dbReference type="EC" id="2.7.12.2" evidence="10"/>
<dbReference type="EMBL" id="J02946">
    <property type="protein sequence ID" value="AAA16819.1"/>
    <property type="molecule type" value="Unassigned_DNA"/>
</dbReference>
<dbReference type="EMBL" id="U12237">
    <property type="protein sequence ID" value="AAA20392.1"/>
    <property type="molecule type" value="Genomic_DNA"/>
</dbReference>
<dbReference type="EMBL" id="Z49403">
    <property type="protein sequence ID" value="CAA89423.1"/>
    <property type="molecule type" value="Genomic_DNA"/>
</dbReference>
<dbReference type="EMBL" id="BK006943">
    <property type="protein sequence ID" value="DAA08673.2"/>
    <property type="molecule type" value="Genomic_DNA"/>
</dbReference>
<dbReference type="PIR" id="S56909">
    <property type="entry name" value="S56909"/>
</dbReference>
<dbReference type="RefSeq" id="NP_012407.2">
    <property type="nucleotide sequence ID" value="NM_001181561.2"/>
</dbReference>
<dbReference type="PDB" id="2VKN">
    <property type="method" value="X-ray"/>
    <property type="resolution" value="2.05 A"/>
    <property type="chains" value="C=92-103"/>
</dbReference>
<dbReference type="PDBsum" id="2VKN"/>
<dbReference type="SMR" id="P08018"/>
<dbReference type="BioGRID" id="33628">
    <property type="interactions" value="521"/>
</dbReference>
<dbReference type="DIP" id="DIP-2368N"/>
<dbReference type="ELM" id="P08018"/>
<dbReference type="FunCoup" id="P08018">
    <property type="interactions" value="372"/>
</dbReference>
<dbReference type="IntAct" id="P08018">
    <property type="interactions" value="53"/>
</dbReference>
<dbReference type="MINT" id="P08018"/>
<dbReference type="STRING" id="4932.YJL128C"/>
<dbReference type="GlyGen" id="P08018">
    <property type="glycosylation" value="3 sites, 1 O-linked glycan (3 sites)"/>
</dbReference>
<dbReference type="iPTMnet" id="P08018"/>
<dbReference type="PaxDb" id="4932-YJL128C"/>
<dbReference type="PeptideAtlas" id="P08018"/>
<dbReference type="EnsemblFungi" id="YJL128C_mRNA">
    <property type="protein sequence ID" value="YJL128C"/>
    <property type="gene ID" value="YJL128C"/>
</dbReference>
<dbReference type="GeneID" id="853313"/>
<dbReference type="KEGG" id="sce:YJL128C"/>
<dbReference type="AGR" id="SGD:S000003664"/>
<dbReference type="SGD" id="S000003664">
    <property type="gene designation" value="PBS2"/>
</dbReference>
<dbReference type="VEuPathDB" id="FungiDB:YJL128C"/>
<dbReference type="eggNOG" id="KOG0581">
    <property type="taxonomic scope" value="Eukaryota"/>
</dbReference>
<dbReference type="GeneTree" id="ENSGT00940000158914"/>
<dbReference type="HOGENOM" id="CLU_000288_79_1_1"/>
<dbReference type="InParanoid" id="P08018"/>
<dbReference type="OMA" id="GDANCIA"/>
<dbReference type="OrthoDB" id="10252354at2759"/>
<dbReference type="BioCyc" id="YEAST:G3O-31578-MONOMER"/>
<dbReference type="BRENDA" id="2.7.12.2">
    <property type="organism ID" value="984"/>
</dbReference>
<dbReference type="Reactome" id="R-SCE-112411">
    <property type="pathway name" value="MAPK1 (ERK2) activation"/>
</dbReference>
<dbReference type="Reactome" id="R-SCE-445144">
    <property type="pathway name" value="Signal transduction by L1"/>
</dbReference>
<dbReference type="Reactome" id="R-SCE-5674135">
    <property type="pathway name" value="MAP2K and MAPK activation"/>
</dbReference>
<dbReference type="Reactome" id="R-SCE-5674499">
    <property type="pathway name" value="Negative feedback regulation of MAPK pathway"/>
</dbReference>
<dbReference type="BioGRID-ORCS" id="853313">
    <property type="hits" value="2 hits in 13 CRISPR screens"/>
</dbReference>
<dbReference type="CD-CODE" id="A777E0F8">
    <property type="entry name" value="P-body"/>
</dbReference>
<dbReference type="CD-CODE" id="E03F929F">
    <property type="entry name" value="Stress granule"/>
</dbReference>
<dbReference type="EvolutionaryTrace" id="P08018"/>
<dbReference type="PRO" id="PR:P08018"/>
<dbReference type="Proteomes" id="UP000002311">
    <property type="component" value="Chromosome X"/>
</dbReference>
<dbReference type="RNAct" id="P08018">
    <property type="molecule type" value="protein"/>
</dbReference>
<dbReference type="GO" id="GO:0005935">
    <property type="term" value="C:cellular bud neck"/>
    <property type="evidence" value="ECO:0000314"/>
    <property type="project" value="SGD"/>
</dbReference>
<dbReference type="GO" id="GO:0005934">
    <property type="term" value="C:cellular bud tip"/>
    <property type="evidence" value="ECO:0000314"/>
    <property type="project" value="SGD"/>
</dbReference>
<dbReference type="GO" id="GO:0005737">
    <property type="term" value="C:cytoplasm"/>
    <property type="evidence" value="ECO:0000314"/>
    <property type="project" value="SGD"/>
</dbReference>
<dbReference type="GO" id="GO:0010494">
    <property type="term" value="C:cytoplasmic stress granule"/>
    <property type="evidence" value="ECO:0007005"/>
    <property type="project" value="SGD"/>
</dbReference>
<dbReference type="GO" id="GO:0031416">
    <property type="term" value="C:NatB complex"/>
    <property type="evidence" value="ECO:0000314"/>
    <property type="project" value="UniProtKB"/>
</dbReference>
<dbReference type="GO" id="GO:0005524">
    <property type="term" value="F:ATP binding"/>
    <property type="evidence" value="ECO:0007669"/>
    <property type="project" value="UniProtKB-KW"/>
</dbReference>
<dbReference type="GO" id="GO:0004708">
    <property type="term" value="F:MAP kinase kinase activity"/>
    <property type="evidence" value="ECO:0000315"/>
    <property type="project" value="SGD"/>
</dbReference>
<dbReference type="GO" id="GO:0005078">
    <property type="term" value="F:MAP-kinase scaffold activity"/>
    <property type="evidence" value="ECO:0000353"/>
    <property type="project" value="SGD"/>
</dbReference>
<dbReference type="GO" id="GO:0004672">
    <property type="term" value="F:protein kinase activity"/>
    <property type="evidence" value="ECO:0007005"/>
    <property type="project" value="SGD"/>
</dbReference>
<dbReference type="GO" id="GO:0106310">
    <property type="term" value="F:protein serine kinase activity"/>
    <property type="evidence" value="ECO:0007669"/>
    <property type="project" value="RHEA"/>
</dbReference>
<dbReference type="GO" id="GO:0004674">
    <property type="term" value="F:protein serine/threonine kinase activity"/>
    <property type="evidence" value="ECO:0007669"/>
    <property type="project" value="UniProtKB-KW"/>
</dbReference>
<dbReference type="GO" id="GO:0004713">
    <property type="term" value="F:protein tyrosine kinase activity"/>
    <property type="evidence" value="ECO:0007669"/>
    <property type="project" value="UniProtKB-KW"/>
</dbReference>
<dbReference type="GO" id="GO:0004596">
    <property type="term" value="F:protein-N-terminal amino-acid acetyltransferase activity"/>
    <property type="evidence" value="ECO:0000315"/>
    <property type="project" value="UniProtKB"/>
</dbReference>
<dbReference type="GO" id="GO:0007015">
    <property type="term" value="P:actin filament organization"/>
    <property type="evidence" value="ECO:0000315"/>
    <property type="project" value="SGD"/>
</dbReference>
<dbReference type="GO" id="GO:0071474">
    <property type="term" value="P:cellular hyperosmotic response"/>
    <property type="evidence" value="ECO:0000316"/>
    <property type="project" value="SGD"/>
</dbReference>
<dbReference type="GO" id="GO:0006972">
    <property type="term" value="P:hyperosmotic response"/>
    <property type="evidence" value="ECO:0000315"/>
    <property type="project" value="SGD"/>
</dbReference>
<dbReference type="GO" id="GO:0000165">
    <property type="term" value="P:MAPK cascade"/>
    <property type="evidence" value="ECO:0000318"/>
    <property type="project" value="GO_Central"/>
</dbReference>
<dbReference type="GO" id="GO:0007231">
    <property type="term" value="P:osmosensory signaling pathway"/>
    <property type="evidence" value="ECO:0000314"/>
    <property type="project" value="UniProtKB"/>
</dbReference>
<dbReference type="GO" id="GO:0007232">
    <property type="term" value="P:osmosensory signaling pathway via Sho1 osmosensor"/>
    <property type="evidence" value="ECO:0000353"/>
    <property type="project" value="SGD"/>
</dbReference>
<dbReference type="GO" id="GO:0038066">
    <property type="term" value="P:p38MAPK cascade"/>
    <property type="evidence" value="ECO:0000315"/>
    <property type="project" value="SGD"/>
</dbReference>
<dbReference type="GO" id="GO:0006606">
    <property type="term" value="P:protein import into nucleus"/>
    <property type="evidence" value="ECO:0000315"/>
    <property type="project" value="SGD"/>
</dbReference>
<dbReference type="GO" id="GO:0006468">
    <property type="term" value="P:protein phosphorylation"/>
    <property type="evidence" value="ECO:0000314"/>
    <property type="project" value="UniProtKB"/>
</dbReference>
<dbReference type="GO" id="GO:0046677">
    <property type="term" value="P:response to antibiotic"/>
    <property type="evidence" value="ECO:0007669"/>
    <property type="project" value="UniProtKB-KW"/>
</dbReference>
<dbReference type="CDD" id="cd06622">
    <property type="entry name" value="PKc_PBS2_like"/>
    <property type="match status" value="1"/>
</dbReference>
<dbReference type="FunFam" id="1.10.510.10:FF:000433">
    <property type="entry name" value="MAP kinase kinase PBS2"/>
    <property type="match status" value="1"/>
</dbReference>
<dbReference type="FunFam" id="3.30.200.20:FF:000341">
    <property type="entry name" value="MAP kinase kinase PBS2"/>
    <property type="match status" value="1"/>
</dbReference>
<dbReference type="Gene3D" id="3.30.200.20">
    <property type="entry name" value="Phosphorylase Kinase, domain 1"/>
    <property type="match status" value="1"/>
</dbReference>
<dbReference type="Gene3D" id="1.10.510.10">
    <property type="entry name" value="Transferase(Phosphotransferase) domain 1"/>
    <property type="match status" value="1"/>
</dbReference>
<dbReference type="InterPro" id="IPR011009">
    <property type="entry name" value="Kinase-like_dom_sf"/>
</dbReference>
<dbReference type="InterPro" id="IPR000719">
    <property type="entry name" value="Prot_kinase_dom"/>
</dbReference>
<dbReference type="InterPro" id="IPR008271">
    <property type="entry name" value="Ser/Thr_kinase_AS"/>
</dbReference>
<dbReference type="PANTHER" id="PTHR48013">
    <property type="entry name" value="DUAL SPECIFICITY MITOGEN-ACTIVATED PROTEIN KINASE KINASE 5-RELATED"/>
    <property type="match status" value="1"/>
</dbReference>
<dbReference type="PANTHER" id="PTHR48013:SF25">
    <property type="entry name" value="MAP KINASE KINASE PBS2"/>
    <property type="match status" value="1"/>
</dbReference>
<dbReference type="Pfam" id="PF00069">
    <property type="entry name" value="Pkinase"/>
    <property type="match status" value="1"/>
</dbReference>
<dbReference type="SMART" id="SM00220">
    <property type="entry name" value="S_TKc"/>
    <property type="match status" value="1"/>
</dbReference>
<dbReference type="SUPFAM" id="SSF56112">
    <property type="entry name" value="Protein kinase-like (PK-like)"/>
    <property type="match status" value="1"/>
</dbReference>
<dbReference type="PROSITE" id="PS50011">
    <property type="entry name" value="PROTEIN_KINASE_DOM"/>
    <property type="match status" value="1"/>
</dbReference>
<dbReference type="PROSITE" id="PS00108">
    <property type="entry name" value="PROTEIN_KINASE_ST"/>
    <property type="match status" value="1"/>
</dbReference>